<sequence length="235" mass="26348">MKLGVNIDHVATLRNARGTSYPDPLKAAEIAIDAGADFITVHLREDRRHIRDEDVFNLKKSISTELNLEIAATEEMLEIAKKVKPYSISIVPEKREELTTEGGLDIVNMHSKLSSIIEEMHSSSIKVSLFIDPNIDQLKYLEKLGTKPDIIEIHTGDYCDNPSEKKLQLITNAAEYVNKLGIECHAGHGITYEHAKKMTRIPHISALNIGHYLISEAVFYGLHSVVKTMKMTMSN</sequence>
<protein>
    <recommendedName>
        <fullName evidence="1">Pyridoxine 5'-phosphate synthase</fullName>
        <shortName evidence="1">PNP synthase</shortName>
        <ecNumber evidence="1">2.6.99.2</ecNumber>
    </recommendedName>
</protein>
<accession>C0R576</accession>
<proteinExistence type="inferred from homology"/>
<comment type="function">
    <text evidence="1">Catalyzes the complicated ring closure reaction between the two acyclic compounds 1-deoxy-D-xylulose-5-phosphate (DXP) and 3-amino-2-oxopropyl phosphate (1-amino-acetone-3-phosphate or AAP) to form pyridoxine 5'-phosphate (PNP) and inorganic phosphate.</text>
</comment>
<comment type="catalytic activity">
    <reaction evidence="1">
        <text>3-amino-2-oxopropyl phosphate + 1-deoxy-D-xylulose 5-phosphate = pyridoxine 5'-phosphate + phosphate + 2 H2O + H(+)</text>
        <dbReference type="Rhea" id="RHEA:15265"/>
        <dbReference type="ChEBI" id="CHEBI:15377"/>
        <dbReference type="ChEBI" id="CHEBI:15378"/>
        <dbReference type="ChEBI" id="CHEBI:43474"/>
        <dbReference type="ChEBI" id="CHEBI:57279"/>
        <dbReference type="ChEBI" id="CHEBI:57792"/>
        <dbReference type="ChEBI" id="CHEBI:58589"/>
        <dbReference type="EC" id="2.6.99.2"/>
    </reaction>
</comment>
<comment type="pathway">
    <text evidence="1">Cofactor biosynthesis; pyridoxine 5'-phosphate biosynthesis; pyridoxine 5'-phosphate from D-erythrose 4-phosphate: step 5/5.</text>
</comment>
<comment type="subunit">
    <text evidence="1">Homooctamer; tetramer of dimers.</text>
</comment>
<comment type="subcellular location">
    <subcellularLocation>
        <location evidence="1">Cytoplasm</location>
    </subcellularLocation>
</comment>
<comment type="similarity">
    <text evidence="1">Belongs to the PNP synthase family.</text>
</comment>
<reference key="1">
    <citation type="journal article" date="2009" name="Proc. Natl. Acad. Sci. U.S.A.">
        <title>The mosaic genome structure of the Wolbachia wRi strain infecting Drosophila simulans.</title>
        <authorList>
            <person name="Klasson L."/>
            <person name="Westberg J."/>
            <person name="Sapountzis P."/>
            <person name="Naeslund K."/>
            <person name="Lutnaes Y."/>
            <person name="Darby A.C."/>
            <person name="Veneti Z."/>
            <person name="Chen L."/>
            <person name="Braig H.R."/>
            <person name="Garrett R."/>
            <person name="Bourtzis K."/>
            <person name="Andersson S.G."/>
        </authorList>
    </citation>
    <scope>NUCLEOTIDE SEQUENCE [LARGE SCALE GENOMIC DNA]</scope>
    <source>
        <strain>wRi</strain>
    </source>
</reference>
<evidence type="ECO:0000255" key="1">
    <source>
        <dbReference type="HAMAP-Rule" id="MF_00279"/>
    </source>
</evidence>
<name>PDXJ_WOLWR</name>
<feature type="chain" id="PRO_1000132553" description="Pyridoxine 5'-phosphate synthase">
    <location>
        <begin position="1"/>
        <end position="235"/>
    </location>
</feature>
<feature type="active site" description="Proton acceptor" evidence="1">
    <location>
        <position position="42"/>
    </location>
</feature>
<feature type="active site" description="Proton acceptor" evidence="1">
    <location>
        <position position="69"/>
    </location>
</feature>
<feature type="active site" description="Proton donor" evidence="1">
    <location>
        <position position="188"/>
    </location>
</feature>
<feature type="binding site" evidence="1">
    <location>
        <position position="6"/>
    </location>
    <ligand>
        <name>3-amino-2-oxopropyl phosphate</name>
        <dbReference type="ChEBI" id="CHEBI:57279"/>
    </ligand>
</feature>
<feature type="binding site" evidence="1">
    <location>
        <begin position="8"/>
        <end position="9"/>
    </location>
    <ligand>
        <name>1-deoxy-D-xylulose 5-phosphate</name>
        <dbReference type="ChEBI" id="CHEBI:57792"/>
    </ligand>
</feature>
<feature type="binding site" evidence="1">
    <location>
        <position position="17"/>
    </location>
    <ligand>
        <name>3-amino-2-oxopropyl phosphate</name>
        <dbReference type="ChEBI" id="CHEBI:57279"/>
    </ligand>
</feature>
<feature type="binding site" evidence="1">
    <location>
        <position position="44"/>
    </location>
    <ligand>
        <name>1-deoxy-D-xylulose 5-phosphate</name>
        <dbReference type="ChEBI" id="CHEBI:57792"/>
    </ligand>
</feature>
<feature type="binding site" evidence="1">
    <location>
        <position position="49"/>
    </location>
    <ligand>
        <name>1-deoxy-D-xylulose 5-phosphate</name>
        <dbReference type="ChEBI" id="CHEBI:57792"/>
    </ligand>
</feature>
<feature type="binding site" evidence="1">
    <location>
        <position position="99"/>
    </location>
    <ligand>
        <name>1-deoxy-D-xylulose 5-phosphate</name>
        <dbReference type="ChEBI" id="CHEBI:57792"/>
    </ligand>
</feature>
<feature type="binding site" evidence="1">
    <location>
        <position position="189"/>
    </location>
    <ligand>
        <name>3-amino-2-oxopropyl phosphate</name>
        <dbReference type="ChEBI" id="CHEBI:57279"/>
    </ligand>
</feature>
<feature type="binding site" evidence="1">
    <location>
        <begin position="210"/>
        <end position="211"/>
    </location>
    <ligand>
        <name>3-amino-2-oxopropyl phosphate</name>
        <dbReference type="ChEBI" id="CHEBI:57279"/>
    </ligand>
</feature>
<feature type="site" description="Transition state stabilizer" evidence="1">
    <location>
        <position position="152"/>
    </location>
</feature>
<dbReference type="EC" id="2.6.99.2" evidence="1"/>
<dbReference type="EMBL" id="CP001391">
    <property type="protein sequence ID" value="ACN94918.1"/>
    <property type="molecule type" value="Genomic_DNA"/>
</dbReference>
<dbReference type="RefSeq" id="WP_007548414.1">
    <property type="nucleotide sequence ID" value="NZ_MKIF01000181.1"/>
</dbReference>
<dbReference type="SMR" id="C0R576"/>
<dbReference type="STRING" id="66084.WRi_000550"/>
<dbReference type="KEGG" id="wri:WRi_000550"/>
<dbReference type="HOGENOM" id="CLU_074563_0_0_5"/>
<dbReference type="UniPathway" id="UPA00244">
    <property type="reaction ID" value="UER00313"/>
</dbReference>
<dbReference type="Proteomes" id="UP000001293">
    <property type="component" value="Chromosome"/>
</dbReference>
<dbReference type="GO" id="GO:0005829">
    <property type="term" value="C:cytosol"/>
    <property type="evidence" value="ECO:0007669"/>
    <property type="project" value="TreeGrafter"/>
</dbReference>
<dbReference type="GO" id="GO:0033856">
    <property type="term" value="F:pyridoxine 5'-phosphate synthase activity"/>
    <property type="evidence" value="ECO:0007669"/>
    <property type="project" value="UniProtKB-EC"/>
</dbReference>
<dbReference type="GO" id="GO:0008615">
    <property type="term" value="P:pyridoxine biosynthetic process"/>
    <property type="evidence" value="ECO:0007669"/>
    <property type="project" value="UniProtKB-UniRule"/>
</dbReference>
<dbReference type="CDD" id="cd00003">
    <property type="entry name" value="PNPsynthase"/>
    <property type="match status" value="1"/>
</dbReference>
<dbReference type="Gene3D" id="3.20.20.70">
    <property type="entry name" value="Aldolase class I"/>
    <property type="match status" value="1"/>
</dbReference>
<dbReference type="HAMAP" id="MF_00279">
    <property type="entry name" value="PdxJ"/>
    <property type="match status" value="1"/>
</dbReference>
<dbReference type="InterPro" id="IPR013785">
    <property type="entry name" value="Aldolase_TIM"/>
</dbReference>
<dbReference type="InterPro" id="IPR004569">
    <property type="entry name" value="PyrdxlP_synth_PdxJ"/>
</dbReference>
<dbReference type="InterPro" id="IPR036130">
    <property type="entry name" value="Pyridoxine-5'_phos_synth"/>
</dbReference>
<dbReference type="NCBIfam" id="TIGR00559">
    <property type="entry name" value="pdxJ"/>
    <property type="match status" value="1"/>
</dbReference>
<dbReference type="NCBIfam" id="NF003625">
    <property type="entry name" value="PRK05265.1-3"/>
    <property type="match status" value="1"/>
</dbReference>
<dbReference type="NCBIfam" id="NF003627">
    <property type="entry name" value="PRK05265.1-5"/>
    <property type="match status" value="1"/>
</dbReference>
<dbReference type="PANTHER" id="PTHR30456">
    <property type="entry name" value="PYRIDOXINE 5'-PHOSPHATE SYNTHASE"/>
    <property type="match status" value="1"/>
</dbReference>
<dbReference type="PANTHER" id="PTHR30456:SF0">
    <property type="entry name" value="PYRIDOXINE 5'-PHOSPHATE SYNTHASE"/>
    <property type="match status" value="1"/>
</dbReference>
<dbReference type="Pfam" id="PF03740">
    <property type="entry name" value="PdxJ"/>
    <property type="match status" value="1"/>
</dbReference>
<dbReference type="SUPFAM" id="SSF63892">
    <property type="entry name" value="Pyridoxine 5'-phosphate synthase"/>
    <property type="match status" value="1"/>
</dbReference>
<gene>
    <name evidence="1" type="primary">pdxJ</name>
    <name type="ordered locus">WRi_000550</name>
</gene>
<keyword id="KW-0963">Cytoplasm</keyword>
<keyword id="KW-0664">Pyridoxine biosynthesis</keyword>
<keyword id="KW-0808">Transferase</keyword>
<organism>
    <name type="scientific">Wolbachia sp. subsp. Drosophila simulans (strain wRi)</name>
    <dbReference type="NCBI Taxonomy" id="66084"/>
    <lineage>
        <taxon>Bacteria</taxon>
        <taxon>Pseudomonadati</taxon>
        <taxon>Pseudomonadota</taxon>
        <taxon>Alphaproteobacteria</taxon>
        <taxon>Rickettsiales</taxon>
        <taxon>Anaplasmataceae</taxon>
        <taxon>Wolbachieae</taxon>
        <taxon>Wolbachia</taxon>
    </lineage>
</organism>